<gene>
    <name type="primary">AVP</name>
    <name type="synonym">ARVP</name>
    <name type="synonym">VP</name>
</gene>
<reference key="1">
    <citation type="journal article" date="1985" name="J. Biol. Chem.">
        <title>The human vasopressin gene is linked to the oxytocin gene and is selectively expressed in a cultured lung cancer cell line.</title>
        <authorList>
            <person name="Sausville E."/>
            <person name="Carney D."/>
            <person name="Battey J."/>
        </authorList>
    </citation>
    <scope>NUCLEOTIDE SEQUENCE [GENOMIC DNA]</scope>
</reference>
<reference key="2">
    <citation type="journal article" date="1986" name="Biol. Chem. Hoppe-Seyler">
        <title>The neurohypophyseal hormones vasopressin and oxytocin. Precursor structure, synthesis and regulation.</title>
        <authorList>
            <person name="Rehbein M."/>
            <person name="Hillers M."/>
            <person name="Mohr E."/>
            <person name="Ivell R."/>
            <person name="Morley S."/>
            <person name="Schmale H."/>
            <person name="Richter D."/>
        </authorList>
    </citation>
    <scope>NUCLEOTIDE SEQUENCE [MRNA]</scope>
</reference>
<reference key="3">
    <citation type="journal article" date="1985" name="FEBS Lett.">
        <title>Expression of the vasopressin and oxytocin genes in human hypothalami.</title>
        <authorList>
            <person name="Mohr E."/>
            <person name="Hillers M."/>
            <person name="Ivell R."/>
            <person name="Haulica I.D."/>
            <person name="Richter D."/>
        </authorList>
    </citation>
    <scope>NUCLEOTIDE SEQUENCE [MRNA]</scope>
</reference>
<reference key="4">
    <citation type="journal article" date="1992" name="EMBO J.">
        <title>A missense mutation in the vasopressin-neurophysin precursor gene cosegregates with human autosomal dominant neurohypophyseal diabetes insipidus.</title>
        <authorList>
            <person name="Bahnsen U."/>
            <person name="Oosting P."/>
            <person name="Swaab D.F."/>
            <person name="Nahke P."/>
            <person name="Richter D."/>
            <person name="Schmale H."/>
        </authorList>
    </citation>
    <scope>NUCLEOTIDE SEQUENCE [GENOMIC DNA]</scope>
    <scope>VARIANT NDI VAL-48</scope>
</reference>
<reference key="5">
    <citation type="submission" date="1997-10" db="EMBL/GenBank/DDBJ databases">
        <title>A missense mutation in the vasopressin mRNA with human small-cell lung carcinoma.</title>
        <authorList>
            <person name="Du J."/>
            <person name="North W.G."/>
        </authorList>
    </citation>
    <scope>NUCLEOTIDE SEQUENCE [MRNA]</scope>
    <scope>VARIANT VAL-119</scope>
    <source>
        <tissue>Lung carcinoma</tissue>
    </source>
</reference>
<reference key="6">
    <citation type="journal article" date="2001" name="Nature">
        <title>The DNA sequence and comparative analysis of human chromosome 20.</title>
        <authorList>
            <person name="Deloukas P."/>
            <person name="Matthews L.H."/>
            <person name="Ashurst J.L."/>
            <person name="Burton J."/>
            <person name="Gilbert J.G.R."/>
            <person name="Jones M."/>
            <person name="Stavrides G."/>
            <person name="Almeida J.P."/>
            <person name="Babbage A.K."/>
            <person name="Bagguley C.L."/>
            <person name="Bailey J."/>
            <person name="Barlow K.F."/>
            <person name="Bates K.N."/>
            <person name="Beard L.M."/>
            <person name="Beare D.M."/>
            <person name="Beasley O.P."/>
            <person name="Bird C.P."/>
            <person name="Blakey S.E."/>
            <person name="Bridgeman A.M."/>
            <person name="Brown A.J."/>
            <person name="Buck D."/>
            <person name="Burrill W.D."/>
            <person name="Butler A.P."/>
            <person name="Carder C."/>
            <person name="Carter N.P."/>
            <person name="Chapman J.C."/>
            <person name="Clamp M."/>
            <person name="Clark G."/>
            <person name="Clark L.N."/>
            <person name="Clark S.Y."/>
            <person name="Clee C.M."/>
            <person name="Clegg S."/>
            <person name="Cobley V.E."/>
            <person name="Collier R.E."/>
            <person name="Connor R.E."/>
            <person name="Corby N.R."/>
            <person name="Coulson A."/>
            <person name="Coville G.J."/>
            <person name="Deadman R."/>
            <person name="Dhami P.D."/>
            <person name="Dunn M."/>
            <person name="Ellington A.G."/>
            <person name="Frankland J.A."/>
            <person name="Fraser A."/>
            <person name="French L."/>
            <person name="Garner P."/>
            <person name="Grafham D.V."/>
            <person name="Griffiths C."/>
            <person name="Griffiths M.N.D."/>
            <person name="Gwilliam R."/>
            <person name="Hall R.E."/>
            <person name="Hammond S."/>
            <person name="Harley J.L."/>
            <person name="Heath P.D."/>
            <person name="Ho S."/>
            <person name="Holden J.L."/>
            <person name="Howden P.J."/>
            <person name="Huckle E."/>
            <person name="Hunt A.R."/>
            <person name="Hunt S.E."/>
            <person name="Jekosch K."/>
            <person name="Johnson C.M."/>
            <person name="Johnson D."/>
            <person name="Kay M.P."/>
            <person name="Kimberley A.M."/>
            <person name="King A."/>
            <person name="Knights A."/>
            <person name="Laird G.K."/>
            <person name="Lawlor S."/>
            <person name="Lehvaeslaiho M.H."/>
            <person name="Leversha M.A."/>
            <person name="Lloyd C."/>
            <person name="Lloyd D.M."/>
            <person name="Lovell J.D."/>
            <person name="Marsh V.L."/>
            <person name="Martin S.L."/>
            <person name="McConnachie L.J."/>
            <person name="McLay K."/>
            <person name="McMurray A.A."/>
            <person name="Milne S.A."/>
            <person name="Mistry D."/>
            <person name="Moore M.J.F."/>
            <person name="Mullikin J.C."/>
            <person name="Nickerson T."/>
            <person name="Oliver K."/>
            <person name="Parker A."/>
            <person name="Patel R."/>
            <person name="Pearce T.A.V."/>
            <person name="Peck A.I."/>
            <person name="Phillimore B.J.C.T."/>
            <person name="Prathalingam S.R."/>
            <person name="Plumb R.W."/>
            <person name="Ramsay H."/>
            <person name="Rice C.M."/>
            <person name="Ross M.T."/>
            <person name="Scott C.E."/>
            <person name="Sehra H.K."/>
            <person name="Shownkeen R."/>
            <person name="Sims S."/>
            <person name="Skuce C.D."/>
            <person name="Smith M.L."/>
            <person name="Soderlund C."/>
            <person name="Steward C.A."/>
            <person name="Sulston J.E."/>
            <person name="Swann R.M."/>
            <person name="Sycamore N."/>
            <person name="Taylor R."/>
            <person name="Tee L."/>
            <person name="Thomas D.W."/>
            <person name="Thorpe A."/>
            <person name="Tracey A."/>
            <person name="Tromans A.C."/>
            <person name="Vaudin M."/>
            <person name="Wall M."/>
            <person name="Wallis J.M."/>
            <person name="Whitehead S.L."/>
            <person name="Whittaker P."/>
            <person name="Willey D.L."/>
            <person name="Williams L."/>
            <person name="Williams S.A."/>
            <person name="Wilming L."/>
            <person name="Wray P.W."/>
            <person name="Hubbard T."/>
            <person name="Durbin R.M."/>
            <person name="Bentley D.R."/>
            <person name="Beck S."/>
            <person name="Rogers J."/>
        </authorList>
    </citation>
    <scope>NUCLEOTIDE SEQUENCE [LARGE SCALE GENOMIC DNA]</scope>
</reference>
<reference key="7">
    <citation type="journal article" date="2004" name="Genome Res.">
        <title>The status, quality, and expansion of the NIH full-length cDNA project: the Mammalian Gene Collection (MGC).</title>
        <authorList>
            <consortium name="The MGC Project Team"/>
        </authorList>
    </citation>
    <scope>NUCLEOTIDE SEQUENCE [LARGE SCALE MRNA]</scope>
</reference>
<reference key="8">
    <citation type="journal article" date="1958" name="Proc. Soc. Exp. Biol. Med.">
        <title>On the nature of oxytocin and vasopressin from human pituitary.</title>
        <authorList>
            <person name="Light A."/>
            <person name="du Vigneaud V."/>
        </authorList>
    </citation>
    <scope>PROTEIN SEQUENCE OF 20-28</scope>
    <scope>AMIDATION AT GLY-28</scope>
</reference>
<reference key="9">
    <citation type="journal article" date="1983" name="Proc. Natl. Acad. Sci. U.S.A.">
        <title>Identification of human neurophysins: complete amino acid sequences of MSEL- and VLDV-neurophysins.</title>
        <authorList>
            <person name="Chauvet M.-T."/>
            <person name="Hurpet D."/>
            <person name="Chauvet J."/>
            <person name="Acher R."/>
        </authorList>
    </citation>
    <scope>PROTEIN SEQUENCE OF 32-124</scope>
</reference>
<reference key="10">
    <citation type="journal article" date="1981" name="Biochem. Biophys. Res. Commun.">
        <title>The complete sequence of a novel human pituitary glycopeptide homologous to pig posterior pituitary glycopeptide.</title>
        <authorList>
            <person name="Seidah N.G."/>
            <person name="Benjannet S."/>
            <person name="Chretien M."/>
        </authorList>
    </citation>
    <scope>PROTEIN SEQUENCE OF 126-164</scope>
</reference>
<reference key="11">
    <citation type="journal article" date="2021" name="Cell">
        <title>Soluble ACE2-mediated cell entry of SARS-CoV-2 via interaction with proteins related to the renin-angiotensin system.</title>
        <authorList>
            <person name="Yeung M.L."/>
            <person name="Teng J.L.L."/>
            <person name="Jia L."/>
            <person name="Zhang C."/>
            <person name="Huang C."/>
            <person name="Cai J.P."/>
            <person name="Zhou R."/>
            <person name="Chan K.H."/>
            <person name="Zhao H."/>
            <person name="Zhu L."/>
            <person name="Siu K.L."/>
            <person name="Fung S.Y."/>
            <person name="Yung S."/>
            <person name="Chan T.M."/>
            <person name="To K.K."/>
            <person name="Chan J.F."/>
            <person name="Cai Z."/>
            <person name="Lau S.K.P."/>
            <person name="Chen Z."/>
            <person name="Jin D.Y."/>
            <person name="Woo P.C.Y."/>
            <person name="Yuen K.Y."/>
        </authorList>
    </citation>
    <scope>FUNCTION</scope>
    <scope>INTERACTION WITH SARS-COV-2 SPIKE GLYCOPROTEIN (MICROBIAL FUNCTION)</scope>
</reference>
<reference key="12">
    <citation type="journal article" date="1993" name="J. Clin. Endocrinol. Metab.">
        <title>Familial neurohypophyseal diabetes insipidus associated with a signal peptide mutation.</title>
        <authorList>
            <person name="McLeod J.F."/>
            <person name="Kovacs L."/>
            <person name="Gaskill M.B."/>
            <person name="Rittig S."/>
            <person name="Bradley G.S."/>
            <person name="Robertson G.L."/>
        </authorList>
    </citation>
    <scope>VARIANT NDI THR-19</scope>
</reference>
<reference key="13">
    <citation type="journal article" date="1993" name="J. Clin. Endocrinol. Metab.">
        <title>Glu-47, which forms a salt bridge between neurophysin-II and arginine vasopressin, is deleted in patients with familial central diabetes insipidus.</title>
        <authorList>
            <person name="Yuasa H."/>
            <person name="Ito M."/>
            <person name="Nagasaki H."/>
            <person name="Oiso Y."/>
            <person name="Miyamoto S."/>
            <person name="Sasaki N."/>
            <person name="Saito H."/>
        </authorList>
    </citation>
    <scope>VARIANT NDI GLU-78 DEL</scope>
</reference>
<reference key="14">
    <citation type="journal article" date="1993" name="J. Clin. Invest.">
        <title>Possible involvement of inefficient cleavage of preprovasopressin by signal peptidase as a cause for familial central diabetes insipidus.</title>
        <authorList>
            <person name="Ito M."/>
            <person name="Oiso Y."/>
            <person name="Murase T."/>
            <person name="Kondo K."/>
            <person name="Saito H."/>
            <person name="Chinzei T."/>
            <person name="Racchi M."/>
            <person name="Lively M.O."/>
        </authorList>
    </citation>
    <scope>VARIANT NDI THR-19</scope>
</reference>
<reference key="15">
    <citation type="journal article" date="1994" name="J. Clin. Endocrinol. Metab.">
        <title>A de novo mutation in the coding sequence for neurophysin-II (Pro24--&gt;Leu) is associated with onset and transmission of autosomal dominant neurohypophyseal diabetes insipidus.</title>
        <authorList>
            <person name="Repaske D.R."/>
            <person name="Browning J.E."/>
        </authorList>
    </citation>
    <scope>VARIANT NDI LEU-55</scope>
</reference>
<reference key="16">
    <citation type="journal article" date="1995" name="J. Clin. Endocrinol. Metab.">
        <title>Two novel mutations in the coding region for neurophysin-II associated with familial central diabetes insipidus.</title>
        <authorList>
            <person name="Nagasaki H."/>
            <person name="Ito M."/>
            <person name="Yuasa H."/>
            <person name="Saito H."/>
            <person name="Fukase M."/>
            <person name="Hamada K."/>
            <person name="Ishikawa E."/>
            <person name="Katakami H."/>
            <person name="Oiso Y."/>
        </authorList>
    </citation>
    <scope>VARIANT NDI TRP-93</scope>
</reference>
<reference key="17">
    <citation type="journal article" date="1996" name="Am. J. Hum. Genet.">
        <title>Identification of 13 new mutations in the vasopressin-neurophysin II gene in 17 kindreds with familial autosomal dominant neurohypophyseal diabetes insipidus.</title>
        <authorList>
            <person name="Rittig S."/>
            <person name="Robertson G.L."/>
            <person name="Siggaard C."/>
            <person name="Kovacs L."/>
            <person name="Gregersen N."/>
            <person name="Nyborg J."/>
            <person name="Pedersen E.B."/>
        </authorList>
    </citation>
    <scope>VARIANTS NDI PHE-17; THR-19; VAL-19; ARG-45; CYS-51; GLY-78; PRO-81; ARG-88; SER-88; SER-92 AND CYS-96</scope>
</reference>
<reference key="18">
    <citation type="journal article" date="1996" name="J. Clin. Endocrinol. Metab.">
        <title>A new type of familial central diabetes insipidus caused by a single base substitution in the neurophysin II coding region of the vasopressin gene.</title>
        <authorList>
            <person name="Ueta Y."/>
            <person name="Taniguchi S."/>
            <person name="Yoshida A."/>
            <person name="Murakami I."/>
            <person name="Mitani Y."/>
            <person name="Hisatome I."/>
            <person name="Manabe I."/>
            <person name="Sato R."/>
            <person name="Tsuboi M."/>
            <person name="Ohtahara A."/>
            <person name="Nanba E."/>
            <person name="Shigemasa C."/>
        </authorList>
    </citation>
    <scope>VARIANT NDI VAL-96</scope>
</reference>
<reference key="19">
    <citation type="journal article" date="1997" name="J. Clin. Endocrinol. Metab.">
        <title>Autosomal dominant neurohypophyseal diabetes insipidus associated with a missense mutation encoding Gly23--&gt;Val in neurophysin II.</title>
        <authorList>
            <person name="Gagliardi P.C."/>
            <person name="Bernasconi S."/>
            <person name="Repaske D.R."/>
        </authorList>
    </citation>
    <scope>VARIANT NDI VAL-54</scope>
</reference>
<reference key="20">
    <citation type="journal article" date="1998" name="J. Clin. Endocrinol. Metab.">
        <title>Identification of a novel nonsense mutation and a missense substitution in the vasopressin-neurophysin II gene in two Spanish kindreds with familial neurohypophyseal diabetes insipidus.</title>
        <authorList>
            <person name="Calvo B."/>
            <person name="Bilbao J.R."/>
            <person name="Urrutia I."/>
            <person name="Eizaguirre J."/>
            <person name="Gaztambide S."/>
            <person name="Castano L."/>
        </authorList>
    </citation>
    <scope>VARIANT NDI THR-19</scope>
</reference>
<reference key="21">
    <citation type="journal article" date="1998" name="J. Clin. Endocrinol. Metab.">
        <title>Two novel mutations of the vasopressin gene associated with familial diabetes insipidus and identification of an asymptomatic carrier infant.</title>
        <authorList>
            <person name="Grant F.D."/>
            <person name="Ahmadi A."/>
            <person name="Hosley C.M."/>
            <person name="Majzoub J.A."/>
        </authorList>
    </citation>
    <scope>VARIANTS NDI PHE-87 AND TYR-92</scope>
</reference>
<reference key="22">
    <citation type="journal article" date="1999" name="Hum. Mol. Genet.">
        <title>Autosomal recessive familial neurohypophyseal diabetes insipidus with continued secretion of mutant weakly active vasopressin.</title>
        <authorList>
            <person name="Willcutts M.D."/>
            <person name="Felner E."/>
            <person name="White P.C."/>
        </authorList>
    </citation>
    <scope>VARIANT NDI LEU-26</scope>
</reference>
<reference key="23">
    <citation type="journal article" date="1999" name="J. Clin. Endocrinol. Metab.">
        <title>Molecular analysis in familial neurohypophyseal diabetes insipidus: early diagnosis of an asymptomatic carrier.</title>
        <authorList>
            <person name="Calvo B."/>
            <person name="Bilbao J.R."/>
            <person name="Rodriguez A."/>
            <person name="Rodriguez-Arnao M.D."/>
            <person name="Castano L."/>
        </authorList>
    </citation>
    <scope>VARIANT NDI ARG-54</scope>
</reference>
<reference key="24">
    <citation type="journal article" date="1999" name="Mol. Genet. Metab.">
        <title>A novel mutation (R97C) in the neurophysin moiety of prepro-vasopressin-neurophysin II associated with autosomal-dominant neurohypophyseal diabetes insipidus.</title>
        <authorList>
            <person name="Rutishauser J."/>
            <person name="Kopp P."/>
            <person name="Gaskill M.B."/>
            <person name="Kotlar T.J."/>
            <person name="Robertson G.L."/>
        </authorList>
    </citation>
    <scope>VARIANT NDI CYS-97</scope>
</reference>
<reference key="25">
    <citation type="journal article" date="2000" name="Clin. Chem.">
        <title>Identification of two distinct mutations at the same nucleotide position, concomitantly with a novel polymorphism in the vasopressin-neurophysin II gene (AVP-NP II) in two Dutch families with familial neurohypophyseal diabetes insipidus.</title>
        <authorList>
            <person name="Abbes A.P."/>
            <person name="Bruggeman B."/>
            <person name="van den Akker E.L.T."/>
            <person name="de Groot M.R."/>
            <person name="Franken A.A.M."/>
            <person name="Drexhage V.R."/>
            <person name="Engel H."/>
        </authorList>
    </citation>
    <scope>VARIANTS NDI ARG-116 AND GLY-116</scope>
</reference>
<reference key="26">
    <citation type="journal article" date="2000" name="Horm. Res.">
        <title>A novel arginine vasopressin-neurophysin II mutation causes autosomal dominant neurohypophyseal diabetes insipidus and morphologic pituitary changes.</title>
        <authorList>
            <person name="Skordis N."/>
            <person name="Patsalis P.C."/>
            <person name="Hettinger J.A."/>
            <person name="Kontou M."/>
            <person name="Herakleous E."/>
            <person name="Krishnamani M.R."/>
            <person name="Phillips J.A. III"/>
        </authorList>
    </citation>
    <scope>VARIANT NDI TYR-59</scope>
</reference>
<reference key="27">
    <citation type="journal article" date="2000" name="Int. J. Mol. Med.">
        <title>Familial neurohypophyseal diabetes insipidus associated with a novel mutation in the vasopressin-neurophysin II gene.</title>
        <authorList>
            <person name="Fujii H."/>
            <person name="Iida S."/>
            <person name="Moriwaki K."/>
        </authorList>
    </citation>
    <scope>VARIANT NDI TYR-105</scope>
</reference>
<reference key="28">
    <citation type="journal article" date="2001" name="Exp. Clin. Endocrinol. Diabetes">
        <title>A new mutation of the arginine vasopressin-neurophysin II gene in a family with autosomal dominant neurohypophyseal diabetes insipidus.</title>
        <authorList>
            <person name="Mundschenk J."/>
            <person name="Rittig S."/>
            <person name="Siggaard C."/>
            <person name="Hensen J."/>
            <person name="Lehnert H."/>
        </authorList>
    </citation>
    <scope>VARIANT NDI PRO-97</scope>
</reference>
<reference key="29">
    <citation type="journal article" date="2001" name="J. Clin. Endocrinol. Metab.">
        <title>Familial neurohypophysial diabetes insipidus in a large Dutch kindred: effect of the onset of diabetes on growth in children and cell biological defects of the mutant vasopressin prohormone.</title>
        <authorList>
            <person name="Nijenhuis M."/>
            <person name="van den Akker E.L.T."/>
            <person name="Zalm R."/>
            <person name="Franken A.A.M."/>
            <person name="Abbes A.P."/>
            <person name="Engel H."/>
            <person name="de Wied D."/>
            <person name="Burbach J.P.H."/>
        </authorList>
    </citation>
    <scope>VARIANT NDI GLY-116</scope>
    <scope>CHARACTERIZATION OF VARIANT NDI GLY-116</scope>
</reference>
<reference key="30">
    <citation type="journal article" date="2001" name="Mol. Genet. Metab.">
        <title>A missense mutation encoding cys(67) --&gt; gly in neurophysin ii is associated with early onset autosomal dominant neurohypophyseal diabetes insipidus.</title>
        <authorList>
            <person name="DiMeglio L.A."/>
            <person name="Gagliardi P.C."/>
            <person name="Browning J.E."/>
            <person name="Quigley C.A."/>
            <person name="Repaske D.R."/>
        </authorList>
    </citation>
    <scope>VARIANT NDI GLY-98</scope>
</reference>
<reference key="31">
    <citation type="journal article" date="2002" name="Eur. J. Endocrinol.">
        <title>Clinical and molecular analysis of three families with autosomal dominant neurohypophyseal diabetes insipidus associated with a novel and recurrent mutations in the vasopressin-neurophysin II gene.</title>
        <authorList>
            <person name="Rutishauser J."/>
            <person name="Kopp P."/>
            <person name="Gaskill M.B."/>
            <person name="Kotlar T.J."/>
            <person name="Robertson G.L."/>
        </authorList>
    </citation>
    <scope>VARIANTS NDI ARG-54; TYR-92 AND ARG-105</scope>
</reference>
<reference key="32">
    <citation type="journal article" date="2002" name="Exp. Clin. Endocrinol. Diabetes">
        <title>Identification of a novel mutation in the arginine vasopressin-neurophysin II gene in familial central diabetes insipidus.</title>
        <authorList>
            <person name="Bullmann C."/>
            <person name="Kotzka J."/>
            <person name="Grimm T."/>
            <person name="Heppner C."/>
            <person name="Jockenhovel F."/>
            <person name="Krone W."/>
            <person name="Muller-Wieland D."/>
        </authorList>
    </citation>
    <scope>VARIANT NDI SER-92</scope>
</reference>
<reference key="33">
    <citation type="journal article" date="2002" name="J. Clin. Endocrinol. Metab.">
        <title>Autosomal dominant neurohypophyseal diabetes insipidus due to substitution of histidine for tyrosine-2 in the vasopressin moiety of the hormone precursor.</title>
        <authorList>
            <person name="Rittig S."/>
            <person name="Siggaard C."/>
            <person name="Ozata M."/>
            <person name="Yetkin I."/>
            <person name="Gregersen N."/>
            <person name="Pedersen E.B."/>
            <person name="Robertson G.L."/>
        </authorList>
    </citation>
    <scope>VARIANT NDI HIS-21</scope>
</reference>
<reference key="34">
    <citation type="journal article" date="2002" name="Mol. Genet. Metab.">
        <title>A missense mutation encoding Cys73Phe in neurophysin II is associated with autosomal dominant neurohypophyseal diabetes insipidus.</title>
        <authorList>
            <person name="Santiprabhob J."/>
            <person name="Browning J.E."/>
            <person name="Repaske D.R."/>
        </authorList>
    </citation>
    <scope>VARIANT NDI PHE-104</scope>
</reference>
<reference key="35">
    <citation type="journal article" date="2003" name="Clin. Endocrinol. (Oxf.)">
        <title>A signal peptide mutation of the arginine vasopressin gene in monozygotic twins.</title>
        <authorList>
            <person name="Boson W.L."/>
            <person name="Sarubi J.C."/>
            <person name="D'Alva C.B."/>
            <person name="Friedman E."/>
            <person name="Faria D."/>
            <person name="De Marco L."/>
            <person name="Wajchenberg B."/>
        </authorList>
    </citation>
    <scope>VARIANT NDI THR-19</scope>
</reference>
<reference key="36">
    <citation type="journal article" date="2003" name="Clin. Endocrinol. (Oxf.)">
        <title>Progressive decline of vasopressin secretion in familial autosomal dominant neurohypophyseal diabetes insipidus presenting a novel mutation in the vasopressin-neurophysin II gene.</title>
        <authorList>
            <person name="Elias P.C.L."/>
            <person name="Elias L.L.K."/>
            <person name="Torres N."/>
            <person name="Moreira A.C."/>
            <person name="Antunes-Rodrigues J."/>
            <person name="Castro M."/>
        </authorList>
    </citation>
    <scope>VARIANT NDI PRO-99</scope>
</reference>
<reference key="37">
    <citation type="journal article" date="2003" name="Horm. Res.">
        <title>A new missense mutation of the vasopressin-neurophysin II gene in a family with neurohypophyseal diabetes insipidus.</title>
        <authorList>
            <person name="Wolf M.T.F."/>
            <person name="Doetsch J."/>
            <person name="Metzler M."/>
            <person name="Holder M."/>
            <person name="Repp R."/>
            <person name="Rascher W."/>
        </authorList>
    </citation>
    <scope>VARIANT NDI PHE-58</scope>
</reference>
<reference key="38">
    <citation type="journal article" date="2004" name="Eur. J. Endocrinol.">
        <title>Identification of a novel mutation in the arginine vasopressin-neurophysin II gene affecting the sixth intrachain disulfide bridge of the neurophysin II moiety.</title>
        <authorList>
            <person name="Baglioni S."/>
            <person name="Corona G."/>
            <person name="Maggi M."/>
            <person name="Serio M."/>
            <person name="Peri A."/>
        </authorList>
    </citation>
    <scope>VARIANT NDI SER-98</scope>
</reference>
<reference key="39">
    <citation type="journal article" date="2004" name="Eur. J. Hum. Genet.">
        <title>Six novel mutations in the arginine vasopressin gene in 15 kindreds with autosomal dominant familial neurohypophyseal diabetes insipidus give further insight into the pathogenesis.</title>
        <authorList>
            <person name="Christensen J.H."/>
            <person name="Siggaard C."/>
            <person name="Corydon T.J."/>
            <person name="deSanctis L."/>
            <person name="Kovacs L."/>
            <person name="Robertson G.L."/>
            <person name="Gregersen N."/>
            <person name="Rittig S."/>
        </authorList>
    </citation>
    <scope>VARIANTS NDI THR-19; VAL-19; ARG-54; ALA-67; GLY-78; GLU-78 DEL; ASP-96; CYS-96; GLY-104 AND TRP-116</scope>
</reference>
<reference key="40">
    <citation type="journal article" date="2008" name="J. Biol. Chem.">
        <title>Conopressin-T from Conus tulipa reveals an antagonist switch in vasopressin-like peptides.</title>
        <authorList>
            <person name="Dutertre S."/>
            <person name="Croker D."/>
            <person name="Daly N.L."/>
            <person name="Andersson A."/>
            <person name="Muttenthaler M."/>
            <person name="Lumsden N.G."/>
            <person name="Craik D.J."/>
            <person name="Alewood P.F."/>
            <person name="Guillon G."/>
            <person name="Lewis R.J."/>
        </authorList>
    </citation>
    <scope>FUNCTION OF VASOPRESSIN</scope>
    <scope>MUTAGENESIS OF GLY-28</scope>
    <scope>SUBUNIT</scope>
</reference>
<comment type="function">
    <molecule>Neurophysin 2</molecule>
    <text>Specifically binds vasopressin.</text>
</comment>
<comment type="function">
    <molecule>Arg-vasopressin</molecule>
    <text evidence="22">Has a direct antidiuretic action on the kidney, it also causes vasoconstriction of the peripheral vessels. Acts by binding to vasopressin receptors (V1bR/AVPR1B, V1aR/AVPR1A, and V2R/AVPR2) (PubMed:18174156).</text>
</comment>
<comment type="subunit">
    <text evidence="22">Interacts with vasopressin receptors V1bR/AVPR1B (Ki=85 pM), V1aR/AVPR1A (Ki=0.6 nM) and V2R/AVPR2 (Ki=4.9 nM) (PubMed:18174156). Interacts with oxytocin receptor (OXTR) (Ki=110 nM) (PubMed:18174156).</text>
</comment>
<comment type="subunit">
    <molecule>Arg-vasopressin</molecule>
    <text evidence="23">(Microbial infection) May interact with SARS coronavirus-2/SARS-CoV-2; they may form a complex with secreted ACE2.</text>
</comment>
<comment type="interaction">
    <interactant intactId="EBI-6858021">
        <id>P01185</id>
    </interactant>
    <interactant intactId="EBI-1053424">
        <id>O43741</id>
        <label>PRKAB2</label>
    </interactant>
    <organismsDiffer>false</organismsDiffer>
    <experiments>3</experiments>
</comment>
<comment type="subcellular location">
    <subcellularLocation>
        <location>Secreted</location>
    </subcellularLocation>
</comment>
<comment type="disease" evidence="2 3 4 5 6 7 8 9 10 11 12 13 14 15 16 18 19 20 21 26 27 28 29 30 31 32 33 34 35">
    <disease id="DI-01217">
        <name>Diabetes insipidus, neurohypophyseal</name>
        <acronym>NDI</acronym>
        <description>A disease characterized by persistent thirst, polydipsia and polyuria. Affected individuals are apparently normal at birth, but characteristically develop symptoms of vasopressin deficiency during childhood.</description>
        <dbReference type="MIM" id="125700"/>
    </disease>
    <text>The disease is caused by variants affecting the gene represented in this entry.</text>
</comment>
<comment type="similarity">
    <text evidence="37">Belongs to the vasopressin/oxytocin family.</text>
</comment>
<comment type="online information" name="Wikipedia">
    <link uri="https://en.wikipedia.org/wiki/Vasopressin"/>
    <text>Vasopressin entry</text>
</comment>
<sequence>MPDTMLPACFLGLLAFSSACYFQNCPRGGKRAMSDLELRQCLPCGPGGKGRCFGPSICCADELGCFVGTAEALRCQEENYLPSPCQSGQKACGSGGRCAAFGVCCNDESCVTEPECREGFHRRARASDRSNATQLDGPAGALLLRLVQLAGAPEPFEPAQPDAY</sequence>
<protein>
    <recommendedName>
        <fullName>Vasopressin-neurophysin 2-copeptin</fullName>
    </recommendedName>
    <alternativeName>
        <fullName>AVP-NPII</fullName>
    </alternativeName>
    <component>
        <recommendedName>
            <fullName>Arg-vasopressin</fullName>
        </recommendedName>
        <alternativeName>
            <fullName>Arginine-vasopressin</fullName>
        </alternativeName>
    </component>
    <component>
        <recommendedName>
            <fullName>Neurophysin 2</fullName>
        </recommendedName>
        <alternativeName>
            <fullName>Neurophysin-II</fullName>
        </alternativeName>
    </component>
    <component>
        <recommendedName>
            <fullName>Copeptin</fullName>
        </recommendedName>
    </component>
</protein>
<accession>P01185</accession>
<accession>A0AV35</accession>
<accession>O14935</accession>
<keyword id="KW-0002">3D-structure</keyword>
<keyword id="KW-0027">Amidation</keyword>
<keyword id="KW-0165">Cleavage on pair of basic residues</keyword>
<keyword id="KW-0218">Diabetes insipidus</keyword>
<keyword id="KW-0903">Direct protein sequencing</keyword>
<keyword id="KW-0225">Disease variant</keyword>
<keyword id="KW-1015">Disulfide bond</keyword>
<keyword id="KW-0325">Glycoprotein</keyword>
<keyword id="KW-0372">Hormone</keyword>
<keyword id="KW-0945">Host-virus interaction</keyword>
<keyword id="KW-1267">Proteomics identification</keyword>
<keyword id="KW-1185">Reference proteome</keyword>
<keyword id="KW-0964">Secreted</keyword>
<keyword id="KW-0732">Signal</keyword>
<keyword id="KW-0838">Vasoactive</keyword>
<keyword id="KW-0839">Vasoconstrictor</keyword>
<feature type="signal peptide" evidence="17">
    <location>
        <begin position="1"/>
        <end position="19"/>
    </location>
</feature>
<feature type="peptide" id="PRO_0000020515" description="Arg-vasopressin" evidence="17">
    <location>
        <begin position="20"/>
        <end position="28"/>
    </location>
</feature>
<feature type="chain" id="PRO_0000020516" description="Neurophysin 2" evidence="24">
    <location>
        <begin position="32"/>
        <end position="124"/>
    </location>
</feature>
<feature type="peptide" id="PRO_0000020517" description="Copeptin" evidence="25">
    <location>
        <begin position="126"/>
        <end position="164"/>
    </location>
</feature>
<feature type="site" description="Important for agonist activity on V1aR/AVPR1A" evidence="22">
    <location>
        <position position="28"/>
    </location>
</feature>
<feature type="modified residue" description="Glycine amide" evidence="17">
    <location>
        <position position="28"/>
    </location>
</feature>
<feature type="glycosylation site" description="N-linked (GlcNAc...) asparagine">
    <location>
        <position position="131"/>
    </location>
</feature>
<feature type="disulfide bond">
    <location>
        <begin position="20"/>
        <end position="25"/>
    </location>
</feature>
<feature type="disulfide bond" evidence="1">
    <location>
        <begin position="41"/>
        <end position="85"/>
    </location>
</feature>
<feature type="disulfide bond" evidence="1">
    <location>
        <begin position="44"/>
        <end position="58"/>
    </location>
</feature>
<feature type="disulfide bond" evidence="1">
    <location>
        <begin position="52"/>
        <end position="75"/>
    </location>
</feature>
<feature type="disulfide bond" evidence="1">
    <location>
        <begin position="59"/>
        <end position="65"/>
    </location>
</feature>
<feature type="disulfide bond" evidence="1">
    <location>
        <begin position="92"/>
        <end position="104"/>
    </location>
</feature>
<feature type="disulfide bond" evidence="1">
    <location>
        <begin position="98"/>
        <end position="116"/>
    </location>
</feature>
<feature type="disulfide bond" evidence="1">
    <location>
        <begin position="105"/>
        <end position="110"/>
    </location>
</feature>
<feature type="sequence variant" id="VAR_004980" description="In NDI." evidence="31">
    <original>S</original>
    <variation>F</variation>
    <location>
        <position position="17"/>
    </location>
</feature>
<feature type="sequence variant" id="VAR_004981" description="In NDI; probably causes insufficient processing of precursor; dbSNP:rs387906511." evidence="15 19 29 30 31 34">
    <original>A</original>
    <variation>T</variation>
    <location>
        <position position="19"/>
    </location>
</feature>
<feature type="sequence variant" id="VAR_004982" description="In NDI; dbSNP:rs387906512." evidence="19 31">
    <original>A</original>
    <variation>V</variation>
    <location>
        <position position="19"/>
    </location>
</feature>
<feature type="sequence variant" id="VAR_015262" description="In NDI; dbSNP:rs121964893." evidence="13">
    <original>Y</original>
    <variation>H</variation>
    <location>
        <position position="21"/>
    </location>
</feature>
<feature type="sequence variant" id="VAR_015263" description="In NDI; weakly active; dbSNP:rs142886338." evidence="3">
    <original>P</original>
    <variation>L</variation>
    <location>
        <position position="26"/>
    </location>
</feature>
<feature type="sequence variant" id="VAR_004983" description="In NDI." evidence="31">
    <original>G</original>
    <variation>R</variation>
    <location>
        <position position="45"/>
    </location>
</feature>
<feature type="sequence variant" id="VAR_004984" description="In NDI; dbSNP:rs121964883." evidence="21">
    <original>G</original>
    <variation>V</variation>
    <location>
        <position position="48"/>
    </location>
</feature>
<feature type="sequence variant" id="VAR_004985" description="In NDI; dbSNP:rs2066120171." evidence="31">
    <original>R</original>
    <variation>C</variation>
    <location>
        <position position="51"/>
    </location>
</feature>
<feature type="sequence variant" id="VAR_015264" description="In NDI.">
    <original>C</original>
    <variation>R</variation>
    <location>
        <position position="52"/>
    </location>
</feature>
<feature type="sequence variant" id="VAR_015265" description="In NDI; dbSNP:rs121964888." evidence="4 11 19">
    <original>G</original>
    <variation>R</variation>
    <location>
        <position position="54"/>
    </location>
</feature>
<feature type="sequence variant" id="VAR_015266" description="In NDI; dbSNP:rs121964887." evidence="33">
    <original>G</original>
    <variation>V</variation>
    <location>
        <position position="54"/>
    </location>
</feature>
<feature type="sequence variant" id="VAR_004986" description="In NDI." evidence="27">
    <original>P</original>
    <variation>L</variation>
    <location>
        <position position="55"/>
    </location>
</feature>
<feature type="sequence variant" id="VAR_029997" description="In NDI." evidence="16">
    <original>C</original>
    <variation>F</variation>
    <location>
        <position position="58"/>
    </location>
</feature>
<feature type="sequence variant" id="VAR_015267" description="In NDI.">
    <original>C</original>
    <variation>R</variation>
    <location>
        <position position="59"/>
    </location>
</feature>
<feature type="sequence variant" id="VAR_015268" description="In NDI." evidence="7">
    <original>C</original>
    <variation>Y</variation>
    <location>
        <position position="59"/>
    </location>
</feature>
<feature type="sequence variant" id="VAR_019273" description="In NDI; dbSNP:rs28934878." evidence="19">
    <original>V</original>
    <variation>A</variation>
    <location>
        <position position="67"/>
    </location>
</feature>
<feature type="sequence variant" id="VAR_004988" description="In NDI." evidence="19 31">
    <original>E</original>
    <variation>G</variation>
    <location>
        <position position="78"/>
    </location>
</feature>
<feature type="sequence variant" id="VAR_004987" description="In NDI; dbSNP:rs2066119604." evidence="19 28">
    <location>
        <position position="78"/>
    </location>
</feature>
<feature type="sequence variant" id="VAR_004989" description="In NDI." evidence="31">
    <original>L</original>
    <variation>P</variation>
    <location>
        <position position="81"/>
    </location>
</feature>
<feature type="sequence variant" id="VAR_011894" description="In dbSNP:rs5195.">
    <original>P</original>
    <variation>L</variation>
    <location>
        <position position="82"/>
    </location>
</feature>
<feature type="sequence variant" id="VAR_015269" description="In NDI; dbSNP:rs121964890." evidence="35">
    <original>S</original>
    <variation>F</variation>
    <location>
        <position position="87"/>
    </location>
</feature>
<feature type="sequence variant" id="VAR_004990" description="In NDI." evidence="31">
    <original>G</original>
    <variation>R</variation>
    <location>
        <position position="88"/>
    </location>
</feature>
<feature type="sequence variant" id="VAR_004991" description="In NDI; dbSNP:rs121964882." evidence="31">
    <original>G</original>
    <variation>S</variation>
    <location>
        <position position="88"/>
    </location>
</feature>
<feature type="sequence variant" id="VAR_004992" description="In NDI." evidence="12 31">
    <original>C</original>
    <variation>S</variation>
    <location>
        <position position="92"/>
    </location>
</feature>
<feature type="sequence variant" id="VAR_015270" description="In NDI; dbSNP:rs121964891." evidence="11 35">
    <original>C</original>
    <variation>Y</variation>
    <location>
        <position position="92"/>
    </location>
</feature>
<feature type="sequence variant" id="VAR_004993" description="In NDI; dbSNP:rs121964885." evidence="26">
    <original>G</original>
    <variation>W</variation>
    <location>
        <position position="93"/>
    </location>
</feature>
<feature type="sequence variant" id="VAR_004994" description="In NDI." evidence="19 31">
    <original>G</original>
    <variation>C</variation>
    <location>
        <position position="96"/>
    </location>
</feature>
<feature type="sequence variant" id="VAR_019274" description="In NDI." evidence="19">
    <original>G</original>
    <variation>D</variation>
    <location>
        <position position="96"/>
    </location>
</feature>
<feature type="sequence variant" id="VAR_015271" description="In NDI; dbSNP:rs121964886." evidence="32">
    <original>G</original>
    <variation>V</variation>
    <location>
        <position position="96"/>
    </location>
</feature>
<feature type="sequence variant" id="VAR_015272" description="In NDI." evidence="2">
    <original>R</original>
    <variation>C</variation>
    <location>
        <position position="97"/>
    </location>
</feature>
<feature type="sequence variant" id="VAR_015273" description="In NDI." evidence="10">
    <original>R</original>
    <variation>P</variation>
    <location>
        <position position="97"/>
    </location>
</feature>
<feature type="sequence variant" id="VAR_015274" description="In NDI." evidence="8">
    <original>C</original>
    <variation>G</variation>
    <location>
        <position position="98"/>
    </location>
</feature>
<feature type="sequence variant" id="VAR_029998" description="In NDI." evidence="20">
    <original>C</original>
    <variation>S</variation>
    <location>
        <position position="98"/>
    </location>
</feature>
<feature type="sequence variant" id="VAR_029999" description="In NDI." evidence="18">
    <original>A</original>
    <variation>P</variation>
    <location>
        <position position="99"/>
    </location>
</feature>
<feature type="sequence variant" id="VAR_015275" description="In NDI." evidence="14">
    <original>C</original>
    <variation>F</variation>
    <location>
        <position position="104"/>
    </location>
</feature>
<feature type="sequence variant" id="VAR_019275" description="In NDI." evidence="19">
    <original>C</original>
    <variation>G</variation>
    <location>
        <position position="104"/>
    </location>
</feature>
<feature type="sequence variant" id="VAR_015276" description="In NDI." evidence="11">
    <original>C</original>
    <variation>R</variation>
    <location>
        <position position="105"/>
    </location>
</feature>
<feature type="sequence variant" id="VAR_015279" description="In NDI." evidence="5">
    <original>C</original>
    <variation>Y</variation>
    <location>
        <position position="105"/>
    </location>
</feature>
<feature type="sequence variant" id="VAR_015277" description="In NDI; strong accumulation in the endoplasmic reticulum and an altered morphology of this organelle; dbSNP:rs74315383." evidence="6 9">
    <original>C</original>
    <variation>G</variation>
    <location>
        <position position="116"/>
    </location>
</feature>
<feature type="sequence variant" id="VAR_015278" description="In NDI." evidence="6">
    <original>C</original>
    <variation>R</variation>
    <location>
        <position position="116"/>
    </location>
</feature>
<feature type="sequence variant" id="VAR_019276" description="In NDI." evidence="19">
    <original>C</original>
    <variation>W</variation>
    <location>
        <position position="116"/>
    </location>
</feature>
<feature type="sequence variant" id="VAR_011895" description="In dbSNP:rs1051744." evidence="36">
    <original>G</original>
    <variation>V</variation>
    <location>
        <position position="119"/>
    </location>
</feature>
<feature type="mutagenesis site" description="Gain of antagonist activity on V1aR/AVPR1A (and loss of agonist activity on this receptor). 42-fold decrease in affinity for V1aR/AVPR1A, 2000-fold decrease in affinity for V1bR/AVPR1B, 5-fold decrease in affinity for V2R/AVPR2 and no change in affinity for oxytocin receptor (OXTR)." evidence="22">
    <original>G</original>
    <variation>V</variation>
    <location>
        <position position="28"/>
    </location>
</feature>
<feature type="sequence conflict" description="In Ref. 1; AAA98772." evidence="37" ref="1">
    <original>L</original>
    <variation>P</variation>
    <location>
        <position position="11"/>
    </location>
</feature>
<feature type="sequence conflict" description="In Ref. 5; AAB86629." evidence="37" ref="5">
    <original>G</original>
    <variation>D</variation>
    <location>
        <position position="48"/>
    </location>
</feature>
<proteinExistence type="evidence at protein level"/>
<organism>
    <name type="scientific">Homo sapiens</name>
    <name type="common">Human</name>
    <dbReference type="NCBI Taxonomy" id="9606"/>
    <lineage>
        <taxon>Eukaryota</taxon>
        <taxon>Metazoa</taxon>
        <taxon>Chordata</taxon>
        <taxon>Craniata</taxon>
        <taxon>Vertebrata</taxon>
        <taxon>Euteleostomi</taxon>
        <taxon>Mammalia</taxon>
        <taxon>Eutheria</taxon>
        <taxon>Euarchontoglires</taxon>
        <taxon>Primates</taxon>
        <taxon>Haplorrhini</taxon>
        <taxon>Catarrhini</taxon>
        <taxon>Hominidae</taxon>
        <taxon>Homo</taxon>
    </lineage>
</organism>
<evidence type="ECO:0000250" key="1">
    <source>
        <dbReference type="UniProtKB" id="P01175"/>
    </source>
</evidence>
<evidence type="ECO:0000269" key="2">
    <source>
    </source>
</evidence>
<evidence type="ECO:0000269" key="3">
    <source>
    </source>
</evidence>
<evidence type="ECO:0000269" key="4">
    <source>
    </source>
</evidence>
<evidence type="ECO:0000269" key="5">
    <source>
    </source>
</evidence>
<evidence type="ECO:0000269" key="6">
    <source>
    </source>
</evidence>
<evidence type="ECO:0000269" key="7">
    <source>
    </source>
</evidence>
<evidence type="ECO:0000269" key="8">
    <source>
    </source>
</evidence>
<evidence type="ECO:0000269" key="9">
    <source>
    </source>
</evidence>
<evidence type="ECO:0000269" key="10">
    <source>
    </source>
</evidence>
<evidence type="ECO:0000269" key="11">
    <source>
    </source>
</evidence>
<evidence type="ECO:0000269" key="12">
    <source>
    </source>
</evidence>
<evidence type="ECO:0000269" key="13">
    <source>
    </source>
</evidence>
<evidence type="ECO:0000269" key="14">
    <source>
    </source>
</evidence>
<evidence type="ECO:0000269" key="15">
    <source>
    </source>
</evidence>
<evidence type="ECO:0000269" key="16">
    <source>
    </source>
</evidence>
<evidence type="ECO:0000269" key="17">
    <source>
    </source>
</evidence>
<evidence type="ECO:0000269" key="18">
    <source>
    </source>
</evidence>
<evidence type="ECO:0000269" key="19">
    <source>
    </source>
</evidence>
<evidence type="ECO:0000269" key="20">
    <source>
    </source>
</evidence>
<evidence type="ECO:0000269" key="21">
    <source>
    </source>
</evidence>
<evidence type="ECO:0000269" key="22">
    <source>
    </source>
</evidence>
<evidence type="ECO:0000269" key="23">
    <source>
    </source>
</evidence>
<evidence type="ECO:0000269" key="24">
    <source>
    </source>
</evidence>
<evidence type="ECO:0000269" key="25">
    <source>
    </source>
</evidence>
<evidence type="ECO:0000269" key="26">
    <source>
    </source>
</evidence>
<evidence type="ECO:0000269" key="27">
    <source>
    </source>
</evidence>
<evidence type="ECO:0000269" key="28">
    <source>
    </source>
</evidence>
<evidence type="ECO:0000269" key="29">
    <source>
    </source>
</evidence>
<evidence type="ECO:0000269" key="30">
    <source>
    </source>
</evidence>
<evidence type="ECO:0000269" key="31">
    <source>
    </source>
</evidence>
<evidence type="ECO:0000269" key="32">
    <source>
    </source>
</evidence>
<evidence type="ECO:0000269" key="33">
    <source>
    </source>
</evidence>
<evidence type="ECO:0000269" key="34">
    <source>
    </source>
</evidence>
<evidence type="ECO:0000269" key="35">
    <source>
    </source>
</evidence>
<evidence type="ECO:0000269" key="36">
    <source ref="5"/>
</evidence>
<evidence type="ECO:0000305" key="37"/>
<name>NEU2_HUMAN</name>
<dbReference type="EMBL" id="M11166">
    <property type="protein sequence ID" value="AAA98772.1"/>
    <property type="molecule type" value="Genomic_DNA"/>
</dbReference>
<dbReference type="EMBL" id="M25647">
    <property type="protein sequence ID" value="AAA61291.1"/>
    <property type="molecule type" value="mRNA"/>
</dbReference>
<dbReference type="EMBL" id="X03172">
    <property type="protein sequence ID" value="CAA26935.1"/>
    <property type="molecule type" value="mRNA"/>
</dbReference>
<dbReference type="EMBL" id="X62890">
    <property type="protein sequence ID" value="CAA44681.1"/>
    <property type="molecule type" value="Genomic_DNA"/>
</dbReference>
<dbReference type="EMBL" id="AF031476">
    <property type="protein sequence ID" value="AAB86629.1"/>
    <property type="molecule type" value="mRNA"/>
</dbReference>
<dbReference type="EMBL" id="AL160414">
    <property type="status" value="NOT_ANNOTATED_CDS"/>
    <property type="molecule type" value="Genomic_DNA"/>
</dbReference>
<dbReference type="EMBL" id="X62891">
    <property type="protein sequence ID" value="CAA44682.1"/>
    <property type="molecule type" value="Genomic_DNA"/>
</dbReference>
<dbReference type="EMBL" id="BC126196">
    <property type="protein sequence ID" value="AAI26197.1"/>
    <property type="molecule type" value="mRNA"/>
</dbReference>
<dbReference type="EMBL" id="BC126224">
    <property type="protein sequence ID" value="AAI26225.1"/>
    <property type="molecule type" value="mRNA"/>
</dbReference>
<dbReference type="CCDS" id="CCDS13045.1"/>
<dbReference type="PIR" id="A39269">
    <property type="entry name" value="A39269"/>
</dbReference>
<dbReference type="PIR" id="B94676">
    <property type="entry name" value="NVHU2"/>
</dbReference>
<dbReference type="RefSeq" id="NP_000481.2">
    <property type="nucleotide sequence ID" value="NM_000490.4"/>
</dbReference>
<dbReference type="RefSeq" id="XP_011527569.1">
    <property type="nucleotide sequence ID" value="XM_011529267.1"/>
</dbReference>
<dbReference type="PDB" id="7BB6">
    <property type="method" value="EM"/>
    <property type="resolution" value="4.20 A"/>
    <property type="chains" value="H=20-28"/>
</dbReference>
<dbReference type="PDB" id="7BB7">
    <property type="method" value="EM"/>
    <property type="resolution" value="4.40 A"/>
    <property type="chains" value="H=20-28"/>
</dbReference>
<dbReference type="PDB" id="7DW9">
    <property type="method" value="EM"/>
    <property type="resolution" value="2.60 A"/>
    <property type="chains" value="C=20-28"/>
</dbReference>
<dbReference type="PDB" id="7KH0">
    <property type="method" value="EM"/>
    <property type="resolution" value="2.80 A"/>
    <property type="chains" value="L=20-28"/>
</dbReference>
<dbReference type="PDB" id="7R0C">
    <property type="method" value="EM"/>
    <property type="resolution" value="4.73 A"/>
    <property type="chains" value="B=20-28"/>
</dbReference>
<dbReference type="PDBsum" id="7BB6"/>
<dbReference type="PDBsum" id="7BB7"/>
<dbReference type="PDBsum" id="7DW9"/>
<dbReference type="PDBsum" id="7KH0"/>
<dbReference type="PDBsum" id="7R0C"/>
<dbReference type="EMDB" id="EMD-12128"/>
<dbReference type="EMDB" id="EMD-12129"/>
<dbReference type="EMDB" id="EMD-14221"/>
<dbReference type="EMDB" id="EMD-22872"/>
<dbReference type="SMR" id="P01185"/>
<dbReference type="BioGRID" id="107032">
    <property type="interactions" value="50"/>
</dbReference>
<dbReference type="FunCoup" id="P01185">
    <property type="interactions" value="613"/>
</dbReference>
<dbReference type="IntAct" id="P01185">
    <property type="interactions" value="21"/>
</dbReference>
<dbReference type="STRING" id="9606.ENSP00000369647"/>
<dbReference type="GlyCosmos" id="P01185">
    <property type="glycosylation" value="1 site, No reported glycans"/>
</dbReference>
<dbReference type="GlyGen" id="P01185">
    <property type="glycosylation" value="1 site"/>
</dbReference>
<dbReference type="iPTMnet" id="P01185"/>
<dbReference type="PhosphoSitePlus" id="P01185"/>
<dbReference type="BioMuta" id="AVP"/>
<dbReference type="DMDM" id="128083"/>
<dbReference type="MassIVE" id="P01185"/>
<dbReference type="PaxDb" id="9606-ENSP00000369647"/>
<dbReference type="PeptideAtlas" id="P01185"/>
<dbReference type="ProteomicsDB" id="51342"/>
<dbReference type="Antibodypedia" id="7264">
    <property type="antibodies" value="305 antibodies from 31 providers"/>
</dbReference>
<dbReference type="DNASU" id="551"/>
<dbReference type="Ensembl" id="ENST00000380293.3">
    <property type="protein sequence ID" value="ENSP00000369647.3"/>
    <property type="gene ID" value="ENSG00000101200.5"/>
</dbReference>
<dbReference type="GeneID" id="551"/>
<dbReference type="KEGG" id="hsa:551"/>
<dbReference type="MANE-Select" id="ENST00000380293.3">
    <property type="protein sequence ID" value="ENSP00000369647.3"/>
    <property type="RefSeq nucleotide sequence ID" value="NM_000490.5"/>
    <property type="RefSeq protein sequence ID" value="NP_000481.2"/>
</dbReference>
<dbReference type="AGR" id="HGNC:894"/>
<dbReference type="CTD" id="551"/>
<dbReference type="DisGeNET" id="551"/>
<dbReference type="GeneCards" id="AVP"/>
<dbReference type="HGNC" id="HGNC:894">
    <property type="gene designation" value="AVP"/>
</dbReference>
<dbReference type="HPA" id="ENSG00000101200">
    <property type="expression patterns" value="Tissue enriched (brain)"/>
</dbReference>
<dbReference type="MalaCards" id="AVP"/>
<dbReference type="MIM" id="125700">
    <property type="type" value="phenotype"/>
</dbReference>
<dbReference type="MIM" id="192340">
    <property type="type" value="gene"/>
</dbReference>
<dbReference type="neXtProt" id="NX_P01185"/>
<dbReference type="OpenTargets" id="ENSG00000101200"/>
<dbReference type="Orphanet" id="30925">
    <property type="disease" value="Hereditary arginine vasopressin deficiency"/>
</dbReference>
<dbReference type="PharmGKB" id="PA25186"/>
<dbReference type="VEuPathDB" id="HostDB:ENSG00000101200"/>
<dbReference type="eggNOG" id="ENOG502S21K">
    <property type="taxonomic scope" value="Eukaryota"/>
</dbReference>
<dbReference type="GeneTree" id="ENSGT00390000004511"/>
<dbReference type="HOGENOM" id="CLU_125770_0_0_1"/>
<dbReference type="InParanoid" id="P01185"/>
<dbReference type="OMA" id="CMTEPEC"/>
<dbReference type="OrthoDB" id="10056056at2759"/>
<dbReference type="PAN-GO" id="P01185">
    <property type="GO annotations" value="4 GO annotations based on evolutionary models"/>
</dbReference>
<dbReference type="PhylomeDB" id="P01185"/>
<dbReference type="TreeFam" id="TF333018"/>
<dbReference type="PathwayCommons" id="P01185"/>
<dbReference type="Reactome" id="R-HSA-1368108">
    <property type="pathway name" value="BMAL1:CLOCK,NPAS2 activates circadian gene expression"/>
</dbReference>
<dbReference type="Reactome" id="R-HSA-388479">
    <property type="pathway name" value="Vasopressin-like receptors"/>
</dbReference>
<dbReference type="Reactome" id="R-HSA-416476">
    <property type="pathway name" value="G alpha (q) signalling events"/>
</dbReference>
<dbReference type="Reactome" id="R-HSA-418555">
    <property type="pathway name" value="G alpha (s) signalling events"/>
</dbReference>
<dbReference type="Reactome" id="R-HSA-432040">
    <property type="pathway name" value="Vasopressin regulates renal water homeostasis via Aquaporins"/>
</dbReference>
<dbReference type="Reactome" id="R-HSA-5619099">
    <property type="pathway name" value="Defective AVP does not bind AVPR1A,B and causes neurohypophyseal diabetes insipidus (NDI)"/>
</dbReference>
<dbReference type="Reactome" id="R-HSA-879518">
    <property type="pathway name" value="Transport of organic anions"/>
</dbReference>
<dbReference type="Reactome" id="R-HSA-8856825">
    <property type="pathway name" value="Cargo recognition for clathrin-mediated endocytosis"/>
</dbReference>
<dbReference type="Reactome" id="R-HSA-8856828">
    <property type="pathway name" value="Clathrin-mediated endocytosis"/>
</dbReference>
<dbReference type="Reactome" id="R-HSA-9036092">
    <property type="pathway name" value="Defective AVP does not bind AVPR2 and causes neurohypophyseal diabetes insipidus (NDI)"/>
</dbReference>
<dbReference type="SignaLink" id="P01185"/>
<dbReference type="SIGNOR" id="P01185"/>
<dbReference type="BioGRID-ORCS" id="551">
    <property type="hits" value="17 hits in 1146 CRISPR screens"/>
</dbReference>
<dbReference type="GeneWiki" id="Vasopressin"/>
<dbReference type="GenomeRNAi" id="551"/>
<dbReference type="Pharos" id="P01185">
    <property type="development level" value="Tbio"/>
</dbReference>
<dbReference type="PRO" id="PR:P01185"/>
<dbReference type="Proteomes" id="UP000005640">
    <property type="component" value="Chromosome 20"/>
</dbReference>
<dbReference type="RNAct" id="P01185">
    <property type="molecule type" value="protein"/>
</dbReference>
<dbReference type="Bgee" id="ENSG00000101200">
    <property type="expression patterns" value="Expressed in hypothalamus and 102 other cell types or tissues"/>
</dbReference>
<dbReference type="ExpressionAtlas" id="P01185">
    <property type="expression patterns" value="baseline and differential"/>
</dbReference>
<dbReference type="GO" id="GO:0030669">
    <property type="term" value="C:clathrin-coated endocytic vesicle membrane"/>
    <property type="evidence" value="ECO:0000304"/>
    <property type="project" value="Reactome"/>
</dbReference>
<dbReference type="GO" id="GO:0005829">
    <property type="term" value="C:cytosol"/>
    <property type="evidence" value="ECO:0000304"/>
    <property type="project" value="Reactome"/>
</dbReference>
<dbReference type="GO" id="GO:0030425">
    <property type="term" value="C:dendrite"/>
    <property type="evidence" value="ECO:0007669"/>
    <property type="project" value="Ensembl"/>
</dbReference>
<dbReference type="GO" id="GO:0005576">
    <property type="term" value="C:extracellular region"/>
    <property type="evidence" value="ECO:0000314"/>
    <property type="project" value="UniProtKB"/>
</dbReference>
<dbReference type="GO" id="GO:0005615">
    <property type="term" value="C:extracellular space"/>
    <property type="evidence" value="ECO:0000318"/>
    <property type="project" value="GO_Central"/>
</dbReference>
<dbReference type="GO" id="GO:0098992">
    <property type="term" value="C:neuronal dense core vesicle"/>
    <property type="evidence" value="ECO:0007669"/>
    <property type="project" value="Ensembl"/>
</dbReference>
<dbReference type="GO" id="GO:0030141">
    <property type="term" value="C:secretory granule"/>
    <property type="evidence" value="ECO:0000318"/>
    <property type="project" value="GO_Central"/>
</dbReference>
<dbReference type="GO" id="GO:0005185">
    <property type="term" value="F:neurohypophyseal hormone activity"/>
    <property type="evidence" value="ECO:0007669"/>
    <property type="project" value="InterPro"/>
</dbReference>
<dbReference type="GO" id="GO:0005184">
    <property type="term" value="F:neuropeptide hormone activity"/>
    <property type="evidence" value="ECO:0000314"/>
    <property type="project" value="UniProtKB"/>
</dbReference>
<dbReference type="GO" id="GO:0004672">
    <property type="term" value="F:protein kinase activity"/>
    <property type="evidence" value="ECO:0000314"/>
    <property type="project" value="UniProtKB"/>
</dbReference>
<dbReference type="GO" id="GO:0005102">
    <property type="term" value="F:signaling receptor binding"/>
    <property type="evidence" value="ECO:0000304"/>
    <property type="project" value="ProtInc"/>
</dbReference>
<dbReference type="GO" id="GO:0031894">
    <property type="term" value="F:V1A vasopressin receptor binding"/>
    <property type="evidence" value="ECO:0000353"/>
    <property type="project" value="UniProtKB"/>
</dbReference>
<dbReference type="GO" id="GO:0031895">
    <property type="term" value="F:V1B vasopressin receptor binding"/>
    <property type="evidence" value="ECO:0007669"/>
    <property type="project" value="Ensembl"/>
</dbReference>
<dbReference type="GO" id="GO:0007267">
    <property type="term" value="P:cell-cell signaling"/>
    <property type="evidence" value="ECO:0000304"/>
    <property type="project" value="ProtInc"/>
</dbReference>
<dbReference type="GO" id="GO:0006091">
    <property type="term" value="P:generation of precursor metabolites and energy"/>
    <property type="evidence" value="ECO:0000304"/>
    <property type="project" value="ProtInc"/>
</dbReference>
<dbReference type="GO" id="GO:0007625">
    <property type="term" value="P:grooming behavior"/>
    <property type="evidence" value="ECO:0007669"/>
    <property type="project" value="Ensembl"/>
</dbReference>
<dbReference type="GO" id="GO:0035556">
    <property type="term" value="P:intracellular signal transduction"/>
    <property type="evidence" value="ECO:0000314"/>
    <property type="project" value="UniProtKB"/>
</dbReference>
<dbReference type="GO" id="GO:0007626">
    <property type="term" value="P:locomotory behavior"/>
    <property type="evidence" value="ECO:0007669"/>
    <property type="project" value="Ensembl"/>
</dbReference>
<dbReference type="GO" id="GO:0002125">
    <property type="term" value="P:maternal aggressive behavior"/>
    <property type="evidence" value="ECO:0007669"/>
    <property type="project" value="Ensembl"/>
</dbReference>
<dbReference type="GO" id="GO:0042711">
    <property type="term" value="P:maternal behavior"/>
    <property type="evidence" value="ECO:0007669"/>
    <property type="project" value="Ensembl"/>
</dbReference>
<dbReference type="GO" id="GO:0050891">
    <property type="term" value="P:multicellular organismal-level water homeostasis"/>
    <property type="evidence" value="ECO:0007669"/>
    <property type="project" value="Ensembl"/>
</dbReference>
<dbReference type="GO" id="GO:0043066">
    <property type="term" value="P:negative regulation of apoptotic process"/>
    <property type="evidence" value="ECO:0000314"/>
    <property type="project" value="UniProtKB"/>
</dbReference>
<dbReference type="GO" id="GO:0007621">
    <property type="term" value="P:negative regulation of female receptivity"/>
    <property type="evidence" value="ECO:0007669"/>
    <property type="project" value="Ensembl"/>
</dbReference>
<dbReference type="GO" id="GO:0051970">
    <property type="term" value="P:negative regulation of transmission of nerve impulse"/>
    <property type="evidence" value="ECO:0007669"/>
    <property type="project" value="Ensembl"/>
</dbReference>
<dbReference type="GO" id="GO:0030307">
    <property type="term" value="P:positive regulation of cell growth"/>
    <property type="evidence" value="ECO:0007669"/>
    <property type="project" value="Ensembl"/>
</dbReference>
<dbReference type="GO" id="GO:0008284">
    <property type="term" value="P:positive regulation of cell population proliferation"/>
    <property type="evidence" value="ECO:0007669"/>
    <property type="project" value="Ensembl"/>
</dbReference>
<dbReference type="GO" id="GO:0032849">
    <property type="term" value="P:positive regulation of cellular pH reduction"/>
    <property type="evidence" value="ECO:0007669"/>
    <property type="project" value="Ensembl"/>
</dbReference>
<dbReference type="GO" id="GO:0007204">
    <property type="term" value="P:positive regulation of cytosolic calcium ion concentration"/>
    <property type="evidence" value="ECO:0007669"/>
    <property type="project" value="Ensembl"/>
</dbReference>
<dbReference type="GO" id="GO:0010628">
    <property type="term" value="P:positive regulation of gene expression"/>
    <property type="evidence" value="ECO:0000314"/>
    <property type="project" value="UniProtKB"/>
</dbReference>
<dbReference type="GO" id="GO:0014049">
    <property type="term" value="P:positive regulation of glutamate secretion"/>
    <property type="evidence" value="ECO:0007669"/>
    <property type="project" value="Ensembl"/>
</dbReference>
<dbReference type="GO" id="GO:0031394">
    <property type="term" value="P:positive regulation of prostaglandin biosynthetic process"/>
    <property type="evidence" value="ECO:0007669"/>
    <property type="project" value="Ensembl"/>
</dbReference>
<dbReference type="GO" id="GO:0003084">
    <property type="term" value="P:positive regulation of systemic arterial blood pressure"/>
    <property type="evidence" value="ECO:0007669"/>
    <property type="project" value="Ensembl"/>
</dbReference>
<dbReference type="GO" id="GO:0045907">
    <property type="term" value="P:positive regulation of vasoconstriction"/>
    <property type="evidence" value="ECO:0007669"/>
    <property type="project" value="Ensembl"/>
</dbReference>
<dbReference type="GO" id="GO:0045471">
    <property type="term" value="P:response to ethanol"/>
    <property type="evidence" value="ECO:0007669"/>
    <property type="project" value="Ensembl"/>
</dbReference>
<dbReference type="GO" id="GO:0035094">
    <property type="term" value="P:response to nicotine"/>
    <property type="evidence" value="ECO:0007669"/>
    <property type="project" value="Ensembl"/>
</dbReference>
<dbReference type="GO" id="GO:0033574">
    <property type="term" value="P:response to testosterone"/>
    <property type="evidence" value="ECO:0007669"/>
    <property type="project" value="Ensembl"/>
</dbReference>
<dbReference type="GO" id="GO:0007165">
    <property type="term" value="P:signal transduction"/>
    <property type="evidence" value="ECO:0000304"/>
    <property type="project" value="ProtInc"/>
</dbReference>
<dbReference type="GO" id="GO:0035176">
    <property type="term" value="P:social behavior"/>
    <property type="evidence" value="ECO:0007669"/>
    <property type="project" value="Ensembl"/>
</dbReference>
<dbReference type="GO" id="GO:0046718">
    <property type="term" value="P:symbiont entry into host cell"/>
    <property type="evidence" value="ECO:0000314"/>
    <property type="project" value="UniProtKB"/>
</dbReference>
<dbReference type="GO" id="GO:0042310">
    <property type="term" value="P:vasoconstriction"/>
    <property type="evidence" value="ECO:0007669"/>
    <property type="project" value="UniProtKB-KW"/>
</dbReference>
<dbReference type="GO" id="GO:0006833">
    <property type="term" value="P:water transport"/>
    <property type="evidence" value="ECO:0000304"/>
    <property type="project" value="ProtInc"/>
</dbReference>
<dbReference type="FunFam" id="2.60.9.10:FF:000001">
    <property type="entry name" value="oxytocin-neurophysin 1"/>
    <property type="match status" value="1"/>
</dbReference>
<dbReference type="Gene3D" id="2.60.9.10">
    <property type="entry name" value="Neurohypophysial hormone domain"/>
    <property type="match status" value="1"/>
</dbReference>
<dbReference type="InterPro" id="IPR000981">
    <property type="entry name" value="Neurhyp_horm"/>
</dbReference>
<dbReference type="InterPro" id="IPR036387">
    <property type="entry name" value="Neurhyp_horm_dom_sf"/>
</dbReference>
<dbReference type="InterPro" id="IPR022423">
    <property type="entry name" value="Neurohypophysial_hormone_CS"/>
</dbReference>
<dbReference type="PANTHER" id="PTHR11681">
    <property type="entry name" value="NEUROPHYSIN"/>
    <property type="match status" value="1"/>
</dbReference>
<dbReference type="PANTHER" id="PTHR11681:SF9">
    <property type="entry name" value="VASOPRESSIN-NEUROPHYSIN 2-COPEPTIN"/>
    <property type="match status" value="1"/>
</dbReference>
<dbReference type="Pfam" id="PF00220">
    <property type="entry name" value="Hormone_4"/>
    <property type="match status" value="1"/>
</dbReference>
<dbReference type="Pfam" id="PF00184">
    <property type="entry name" value="Hormone_5"/>
    <property type="match status" value="1"/>
</dbReference>
<dbReference type="PIRSF" id="PIRSF001815">
    <property type="entry name" value="Nonapeptide_hormone_precursor"/>
    <property type="match status" value="1"/>
</dbReference>
<dbReference type="PRINTS" id="PR00831">
    <property type="entry name" value="NEUROPHYSIN"/>
</dbReference>
<dbReference type="SMART" id="SM00003">
    <property type="entry name" value="NH"/>
    <property type="match status" value="1"/>
</dbReference>
<dbReference type="SUPFAM" id="SSF49606">
    <property type="entry name" value="Neurophysin II"/>
    <property type="match status" value="1"/>
</dbReference>
<dbReference type="PROSITE" id="PS00264">
    <property type="entry name" value="NEUROHYPOPHYS_HORM"/>
    <property type="match status" value="1"/>
</dbReference>